<gene>
    <name evidence="1" type="primary">gpmI</name>
    <name type="synonym">pgm</name>
    <name type="ordered locus">ABC3018</name>
</gene>
<sequence>MSKKPVALIILDGFGLREEEKGNAVAHAQKPNFDRYWNEFPHATLRADGENVGLPEGQMGNSEVGHLNIGAGRIVYQSLTRVNLSIREGDFFKNETFIKAMDHVKEKQSALHIYGLLSDGGIHSHIDHIYALLDMAKQQNVERVYVHGFLDGRDVGPTSAEVYLKGLQDKFDEVGLGKLATVHGRYYAMDRDKRWDRVEKSYRAMVYGEGPSYKNGLELLDDSYKNNIVDEFVIPSVITEEDGTPVATVKDDDAVIFCNFRPDRAIQLSQVFTNEDFRGFDRGEKMPKRLHFVCLTKFSETVKGFVAFKPTNLDNTLGEVLSQQNYTQLRIAETEKYPHVTFFFSGGREDEFPGEERILINSPKVATYDLKPEMSAYEVTDALVKEIEGEKHDVIILNFANPDMVGHSGMLEPTVKAIEAVDECLGRVVDALLQKGGAAIITADHGNADEVVTLDGKPMTAHTTNKVPVIVTEKGITLREDGILADLAPTVLDLLGADKPKEMTGKTLKQ</sequence>
<accession>Q5WDK8</accession>
<comment type="function">
    <text evidence="1">Essential for rapid growth and for sporulation. Catalyzes the interconversion of 2-phosphoglycerate and 3-phosphoglycerate.</text>
</comment>
<comment type="catalytic activity">
    <reaction evidence="1">
        <text>(2R)-2-phosphoglycerate = (2R)-3-phosphoglycerate</text>
        <dbReference type="Rhea" id="RHEA:15901"/>
        <dbReference type="ChEBI" id="CHEBI:58272"/>
        <dbReference type="ChEBI" id="CHEBI:58289"/>
        <dbReference type="EC" id="5.4.2.12"/>
    </reaction>
</comment>
<comment type="cofactor">
    <cofactor evidence="1">
        <name>Mn(2+)</name>
        <dbReference type="ChEBI" id="CHEBI:29035"/>
    </cofactor>
    <text evidence="1">Binds 2 manganese ions per subunit.</text>
</comment>
<comment type="pathway">
    <text evidence="1">Carbohydrate degradation; glycolysis; pyruvate from D-glyceraldehyde 3-phosphate: step 3/5.</text>
</comment>
<comment type="subunit">
    <text evidence="1">Monomer.</text>
</comment>
<comment type="similarity">
    <text evidence="1">Belongs to the BPG-independent phosphoglycerate mutase family.</text>
</comment>
<feature type="chain" id="PRO_0000212123" description="2,3-bisphosphoglycerate-independent phosphoglycerate mutase">
    <location>
        <begin position="1"/>
        <end position="510"/>
    </location>
</feature>
<feature type="active site" description="Phosphoserine intermediate" evidence="1">
    <location>
        <position position="62"/>
    </location>
</feature>
<feature type="binding site" evidence="1">
    <location>
        <position position="12"/>
    </location>
    <ligand>
        <name>Mn(2+)</name>
        <dbReference type="ChEBI" id="CHEBI:29035"/>
        <label>2</label>
    </ligand>
</feature>
<feature type="binding site" evidence="1">
    <location>
        <position position="62"/>
    </location>
    <ligand>
        <name>Mn(2+)</name>
        <dbReference type="ChEBI" id="CHEBI:29035"/>
        <label>2</label>
    </ligand>
</feature>
<feature type="binding site" evidence="1">
    <location>
        <position position="123"/>
    </location>
    <ligand>
        <name>substrate</name>
    </ligand>
</feature>
<feature type="binding site" evidence="1">
    <location>
        <begin position="153"/>
        <end position="154"/>
    </location>
    <ligand>
        <name>substrate</name>
    </ligand>
</feature>
<feature type="binding site" evidence="1">
    <location>
        <position position="185"/>
    </location>
    <ligand>
        <name>substrate</name>
    </ligand>
</feature>
<feature type="binding site" evidence="1">
    <location>
        <position position="191"/>
    </location>
    <ligand>
        <name>substrate</name>
    </ligand>
</feature>
<feature type="binding site" evidence="1">
    <location>
        <begin position="261"/>
        <end position="264"/>
    </location>
    <ligand>
        <name>substrate</name>
    </ligand>
</feature>
<feature type="binding site" evidence="1">
    <location>
        <position position="336"/>
    </location>
    <ligand>
        <name>substrate</name>
    </ligand>
</feature>
<feature type="binding site" evidence="1">
    <location>
        <position position="403"/>
    </location>
    <ligand>
        <name>Mn(2+)</name>
        <dbReference type="ChEBI" id="CHEBI:29035"/>
        <label>1</label>
    </ligand>
</feature>
<feature type="binding site" evidence="1">
    <location>
        <position position="407"/>
    </location>
    <ligand>
        <name>Mn(2+)</name>
        <dbReference type="ChEBI" id="CHEBI:29035"/>
        <label>1</label>
    </ligand>
</feature>
<feature type="binding site" evidence="1">
    <location>
        <position position="444"/>
    </location>
    <ligand>
        <name>Mn(2+)</name>
        <dbReference type="ChEBI" id="CHEBI:29035"/>
        <label>2</label>
    </ligand>
</feature>
<feature type="binding site" evidence="1">
    <location>
        <position position="445"/>
    </location>
    <ligand>
        <name>Mn(2+)</name>
        <dbReference type="ChEBI" id="CHEBI:29035"/>
        <label>2</label>
    </ligand>
</feature>
<feature type="binding site" evidence="1">
    <location>
        <position position="462"/>
    </location>
    <ligand>
        <name>Mn(2+)</name>
        <dbReference type="ChEBI" id="CHEBI:29035"/>
        <label>1</label>
    </ligand>
</feature>
<feature type="modified residue" description="Phosphotyrosine" evidence="1">
    <location>
        <position position="36"/>
    </location>
</feature>
<protein>
    <recommendedName>
        <fullName evidence="1">2,3-bisphosphoglycerate-independent phosphoglycerate mutase</fullName>
        <shortName evidence="1">BPG-independent PGAM</shortName>
        <shortName evidence="1">Phosphoglyceromutase</shortName>
        <shortName evidence="1">iPGM</shortName>
        <ecNumber evidence="1">5.4.2.12</ecNumber>
    </recommendedName>
</protein>
<name>GPMI_SHOC1</name>
<evidence type="ECO:0000255" key="1">
    <source>
        <dbReference type="HAMAP-Rule" id="MF_01038"/>
    </source>
</evidence>
<dbReference type="EC" id="5.4.2.12" evidence="1"/>
<dbReference type="EMBL" id="AP006627">
    <property type="protein sequence ID" value="BAD65552.1"/>
    <property type="molecule type" value="Genomic_DNA"/>
</dbReference>
<dbReference type="RefSeq" id="WP_011247860.1">
    <property type="nucleotide sequence ID" value="NC_006582.1"/>
</dbReference>
<dbReference type="SMR" id="Q5WDK8"/>
<dbReference type="STRING" id="66692.ABC3018"/>
<dbReference type="KEGG" id="bcl:ABC3018"/>
<dbReference type="eggNOG" id="COG0696">
    <property type="taxonomic scope" value="Bacteria"/>
</dbReference>
<dbReference type="HOGENOM" id="CLU_026099_2_0_9"/>
<dbReference type="OrthoDB" id="9800863at2"/>
<dbReference type="UniPathway" id="UPA00109">
    <property type="reaction ID" value="UER00186"/>
</dbReference>
<dbReference type="Proteomes" id="UP000001168">
    <property type="component" value="Chromosome"/>
</dbReference>
<dbReference type="GO" id="GO:0005829">
    <property type="term" value="C:cytosol"/>
    <property type="evidence" value="ECO:0007669"/>
    <property type="project" value="TreeGrafter"/>
</dbReference>
<dbReference type="GO" id="GO:0030145">
    <property type="term" value="F:manganese ion binding"/>
    <property type="evidence" value="ECO:0007669"/>
    <property type="project" value="UniProtKB-UniRule"/>
</dbReference>
<dbReference type="GO" id="GO:0004619">
    <property type="term" value="F:phosphoglycerate mutase activity"/>
    <property type="evidence" value="ECO:0007669"/>
    <property type="project" value="UniProtKB-EC"/>
</dbReference>
<dbReference type="GO" id="GO:0006007">
    <property type="term" value="P:glucose catabolic process"/>
    <property type="evidence" value="ECO:0007669"/>
    <property type="project" value="InterPro"/>
</dbReference>
<dbReference type="GO" id="GO:0006096">
    <property type="term" value="P:glycolytic process"/>
    <property type="evidence" value="ECO:0007669"/>
    <property type="project" value="UniProtKB-UniRule"/>
</dbReference>
<dbReference type="GO" id="GO:0030435">
    <property type="term" value="P:sporulation resulting in formation of a cellular spore"/>
    <property type="evidence" value="ECO:0007669"/>
    <property type="project" value="UniProtKB-KW"/>
</dbReference>
<dbReference type="CDD" id="cd16010">
    <property type="entry name" value="iPGM"/>
    <property type="match status" value="1"/>
</dbReference>
<dbReference type="FunFam" id="3.40.1450.10:FF:000001">
    <property type="entry name" value="2,3-bisphosphoglycerate-independent phosphoglycerate mutase"/>
    <property type="match status" value="1"/>
</dbReference>
<dbReference type="FunFam" id="3.40.720.10:FF:000001">
    <property type="entry name" value="2,3-bisphosphoglycerate-independent phosphoglycerate mutase"/>
    <property type="match status" value="1"/>
</dbReference>
<dbReference type="Gene3D" id="3.40.720.10">
    <property type="entry name" value="Alkaline Phosphatase, subunit A"/>
    <property type="match status" value="1"/>
</dbReference>
<dbReference type="Gene3D" id="3.40.1450.10">
    <property type="entry name" value="BPG-independent phosphoglycerate mutase, domain B"/>
    <property type="match status" value="1"/>
</dbReference>
<dbReference type="HAMAP" id="MF_01038">
    <property type="entry name" value="GpmI"/>
    <property type="match status" value="1"/>
</dbReference>
<dbReference type="InterPro" id="IPR017850">
    <property type="entry name" value="Alkaline_phosphatase_core_sf"/>
</dbReference>
<dbReference type="InterPro" id="IPR011258">
    <property type="entry name" value="BPG-indep_PGM_N"/>
</dbReference>
<dbReference type="InterPro" id="IPR006124">
    <property type="entry name" value="Metalloenzyme"/>
</dbReference>
<dbReference type="InterPro" id="IPR036646">
    <property type="entry name" value="PGAM_B_sf"/>
</dbReference>
<dbReference type="InterPro" id="IPR005995">
    <property type="entry name" value="Pgm_bpd_ind"/>
</dbReference>
<dbReference type="NCBIfam" id="TIGR01307">
    <property type="entry name" value="pgm_bpd_ind"/>
    <property type="match status" value="1"/>
</dbReference>
<dbReference type="PANTHER" id="PTHR31637">
    <property type="entry name" value="2,3-BISPHOSPHOGLYCERATE-INDEPENDENT PHOSPHOGLYCERATE MUTASE"/>
    <property type="match status" value="1"/>
</dbReference>
<dbReference type="PANTHER" id="PTHR31637:SF0">
    <property type="entry name" value="2,3-BISPHOSPHOGLYCERATE-INDEPENDENT PHOSPHOGLYCERATE MUTASE"/>
    <property type="match status" value="1"/>
</dbReference>
<dbReference type="Pfam" id="PF06415">
    <property type="entry name" value="iPGM_N"/>
    <property type="match status" value="1"/>
</dbReference>
<dbReference type="Pfam" id="PF01676">
    <property type="entry name" value="Metalloenzyme"/>
    <property type="match status" value="1"/>
</dbReference>
<dbReference type="PIRSF" id="PIRSF001492">
    <property type="entry name" value="IPGAM"/>
    <property type="match status" value="1"/>
</dbReference>
<dbReference type="SUPFAM" id="SSF64158">
    <property type="entry name" value="2,3-Bisphosphoglycerate-independent phosphoglycerate mutase, substrate-binding domain"/>
    <property type="match status" value="1"/>
</dbReference>
<dbReference type="SUPFAM" id="SSF53649">
    <property type="entry name" value="Alkaline phosphatase-like"/>
    <property type="match status" value="1"/>
</dbReference>
<keyword id="KW-0324">Glycolysis</keyword>
<keyword id="KW-0413">Isomerase</keyword>
<keyword id="KW-0464">Manganese</keyword>
<keyword id="KW-0479">Metal-binding</keyword>
<keyword id="KW-0597">Phosphoprotein</keyword>
<keyword id="KW-1185">Reference proteome</keyword>
<keyword id="KW-0749">Sporulation</keyword>
<proteinExistence type="inferred from homology"/>
<reference key="1">
    <citation type="submission" date="2003-10" db="EMBL/GenBank/DDBJ databases">
        <title>The complete genome sequence of the alkaliphilic Bacillus clausii KSM-K16.</title>
        <authorList>
            <person name="Takaki Y."/>
            <person name="Kageyama Y."/>
            <person name="Shimamura S."/>
            <person name="Suzuki H."/>
            <person name="Nishi S."/>
            <person name="Hatada Y."/>
            <person name="Kawai S."/>
            <person name="Ito S."/>
            <person name="Horikoshi K."/>
        </authorList>
    </citation>
    <scope>NUCLEOTIDE SEQUENCE [LARGE SCALE GENOMIC DNA]</scope>
    <source>
        <strain>KSM-K16</strain>
    </source>
</reference>
<organism>
    <name type="scientific">Shouchella clausii (strain KSM-K16)</name>
    <name type="common">Alkalihalobacillus clausii</name>
    <dbReference type="NCBI Taxonomy" id="66692"/>
    <lineage>
        <taxon>Bacteria</taxon>
        <taxon>Bacillati</taxon>
        <taxon>Bacillota</taxon>
        <taxon>Bacilli</taxon>
        <taxon>Bacillales</taxon>
        <taxon>Bacillaceae</taxon>
        <taxon>Shouchella</taxon>
    </lineage>
</organism>